<comment type="function">
    <text evidence="1">Represses a number of genes involved in the response to DNA damage (SOS response), including recA and lexA. In the presence of single-stranded DNA, RecA interacts with LexA causing an autocatalytic cleavage which disrupts the DNA-binding part of LexA, leading to derepression of the SOS regulon and eventually DNA repair.</text>
</comment>
<comment type="catalytic activity">
    <reaction evidence="1">
        <text>Hydrolysis of Ala-|-Gly bond in repressor LexA.</text>
        <dbReference type="EC" id="3.4.21.88"/>
    </reaction>
</comment>
<comment type="subunit">
    <text evidence="1">Homodimer.</text>
</comment>
<comment type="similarity">
    <text evidence="1">Belongs to the peptidase S24 family.</text>
</comment>
<proteinExistence type="inferred from homology"/>
<evidence type="ECO:0000255" key="1">
    <source>
        <dbReference type="HAMAP-Rule" id="MF_00015"/>
    </source>
</evidence>
<accession>B3PEX1</accession>
<gene>
    <name evidence="1" type="primary">lexA</name>
    <name type="ordered locus">CJA_1697</name>
</gene>
<sequence>MYNLTSRQEQVLQLIKQYTEETGYPPTRAEIARILGFKSANAAEEHIKALARKGAIEIMPGASRGIRLTESQSGIPIVGRVAAGNPILAQEHIEDYCNIPNSFFSPSADYFLRVHGMSMKDAGILDGDLLAVHRTDQVRNGQIVVARIGEEVTVKRFKRQGNQAQVELWPENPDFKVIHVDMRDQEFSIEGLSVGVIRRD</sequence>
<dbReference type="EC" id="3.4.21.88" evidence="1"/>
<dbReference type="EMBL" id="CP000934">
    <property type="protein sequence ID" value="ACE84955.1"/>
    <property type="molecule type" value="Genomic_DNA"/>
</dbReference>
<dbReference type="RefSeq" id="WP_012487319.1">
    <property type="nucleotide sequence ID" value="NC_010995.1"/>
</dbReference>
<dbReference type="SMR" id="B3PEX1"/>
<dbReference type="STRING" id="498211.CJA_1697"/>
<dbReference type="MEROPS" id="S24.001"/>
<dbReference type="KEGG" id="cja:CJA_1697"/>
<dbReference type="eggNOG" id="COG1974">
    <property type="taxonomic scope" value="Bacteria"/>
</dbReference>
<dbReference type="HOGENOM" id="CLU_066192_45_3_6"/>
<dbReference type="OrthoDB" id="9802364at2"/>
<dbReference type="Proteomes" id="UP000001036">
    <property type="component" value="Chromosome"/>
</dbReference>
<dbReference type="GO" id="GO:0003677">
    <property type="term" value="F:DNA binding"/>
    <property type="evidence" value="ECO:0007669"/>
    <property type="project" value="UniProtKB-UniRule"/>
</dbReference>
<dbReference type="GO" id="GO:0004252">
    <property type="term" value="F:serine-type endopeptidase activity"/>
    <property type="evidence" value="ECO:0007669"/>
    <property type="project" value="UniProtKB-UniRule"/>
</dbReference>
<dbReference type="GO" id="GO:0006281">
    <property type="term" value="P:DNA repair"/>
    <property type="evidence" value="ECO:0007669"/>
    <property type="project" value="UniProtKB-UniRule"/>
</dbReference>
<dbReference type="GO" id="GO:0006260">
    <property type="term" value="P:DNA replication"/>
    <property type="evidence" value="ECO:0007669"/>
    <property type="project" value="UniProtKB-UniRule"/>
</dbReference>
<dbReference type="GO" id="GO:0045892">
    <property type="term" value="P:negative regulation of DNA-templated transcription"/>
    <property type="evidence" value="ECO:0007669"/>
    <property type="project" value="UniProtKB-UniRule"/>
</dbReference>
<dbReference type="GO" id="GO:0006508">
    <property type="term" value="P:proteolysis"/>
    <property type="evidence" value="ECO:0007669"/>
    <property type="project" value="InterPro"/>
</dbReference>
<dbReference type="GO" id="GO:0009432">
    <property type="term" value="P:SOS response"/>
    <property type="evidence" value="ECO:0007669"/>
    <property type="project" value="UniProtKB-UniRule"/>
</dbReference>
<dbReference type="CDD" id="cd06529">
    <property type="entry name" value="S24_LexA-like"/>
    <property type="match status" value="1"/>
</dbReference>
<dbReference type="FunFam" id="1.10.10.10:FF:000009">
    <property type="entry name" value="LexA repressor"/>
    <property type="match status" value="1"/>
</dbReference>
<dbReference type="FunFam" id="2.10.109.10:FF:000001">
    <property type="entry name" value="LexA repressor"/>
    <property type="match status" value="1"/>
</dbReference>
<dbReference type="Gene3D" id="2.10.109.10">
    <property type="entry name" value="Umud Fragment, subunit A"/>
    <property type="match status" value="1"/>
</dbReference>
<dbReference type="Gene3D" id="1.10.10.10">
    <property type="entry name" value="Winged helix-like DNA-binding domain superfamily/Winged helix DNA-binding domain"/>
    <property type="match status" value="1"/>
</dbReference>
<dbReference type="HAMAP" id="MF_00015">
    <property type="entry name" value="LexA"/>
    <property type="match status" value="1"/>
</dbReference>
<dbReference type="InterPro" id="IPR006200">
    <property type="entry name" value="LexA"/>
</dbReference>
<dbReference type="InterPro" id="IPR039418">
    <property type="entry name" value="LexA-like"/>
</dbReference>
<dbReference type="InterPro" id="IPR036286">
    <property type="entry name" value="LexA/Signal_pep-like_sf"/>
</dbReference>
<dbReference type="InterPro" id="IPR006199">
    <property type="entry name" value="LexA_DNA-bd_dom"/>
</dbReference>
<dbReference type="InterPro" id="IPR050077">
    <property type="entry name" value="LexA_repressor"/>
</dbReference>
<dbReference type="InterPro" id="IPR006197">
    <property type="entry name" value="Peptidase_S24_LexA"/>
</dbReference>
<dbReference type="InterPro" id="IPR015927">
    <property type="entry name" value="Peptidase_S24_S26A/B/C"/>
</dbReference>
<dbReference type="InterPro" id="IPR036388">
    <property type="entry name" value="WH-like_DNA-bd_sf"/>
</dbReference>
<dbReference type="InterPro" id="IPR036390">
    <property type="entry name" value="WH_DNA-bd_sf"/>
</dbReference>
<dbReference type="NCBIfam" id="TIGR00498">
    <property type="entry name" value="lexA"/>
    <property type="match status" value="1"/>
</dbReference>
<dbReference type="PANTHER" id="PTHR33516">
    <property type="entry name" value="LEXA REPRESSOR"/>
    <property type="match status" value="1"/>
</dbReference>
<dbReference type="PANTHER" id="PTHR33516:SF2">
    <property type="entry name" value="LEXA REPRESSOR-RELATED"/>
    <property type="match status" value="1"/>
</dbReference>
<dbReference type="Pfam" id="PF01726">
    <property type="entry name" value="LexA_DNA_bind"/>
    <property type="match status" value="1"/>
</dbReference>
<dbReference type="Pfam" id="PF00717">
    <property type="entry name" value="Peptidase_S24"/>
    <property type="match status" value="1"/>
</dbReference>
<dbReference type="PRINTS" id="PR00726">
    <property type="entry name" value="LEXASERPTASE"/>
</dbReference>
<dbReference type="SUPFAM" id="SSF51306">
    <property type="entry name" value="LexA/Signal peptidase"/>
    <property type="match status" value="1"/>
</dbReference>
<dbReference type="SUPFAM" id="SSF46785">
    <property type="entry name" value="Winged helix' DNA-binding domain"/>
    <property type="match status" value="1"/>
</dbReference>
<protein>
    <recommendedName>
        <fullName evidence="1">LexA repressor</fullName>
        <ecNumber evidence="1">3.4.21.88</ecNumber>
    </recommendedName>
</protein>
<organism>
    <name type="scientific">Cellvibrio japonicus (strain Ueda107)</name>
    <name type="common">Pseudomonas fluorescens subsp. cellulosa</name>
    <dbReference type="NCBI Taxonomy" id="498211"/>
    <lineage>
        <taxon>Bacteria</taxon>
        <taxon>Pseudomonadati</taxon>
        <taxon>Pseudomonadota</taxon>
        <taxon>Gammaproteobacteria</taxon>
        <taxon>Cellvibrionales</taxon>
        <taxon>Cellvibrionaceae</taxon>
        <taxon>Cellvibrio</taxon>
    </lineage>
</organism>
<reference key="1">
    <citation type="journal article" date="2008" name="J. Bacteriol.">
        <title>Insights into plant cell wall degradation from the genome sequence of the soil bacterium Cellvibrio japonicus.</title>
        <authorList>
            <person name="DeBoy R.T."/>
            <person name="Mongodin E.F."/>
            <person name="Fouts D.E."/>
            <person name="Tailford L.E."/>
            <person name="Khouri H."/>
            <person name="Emerson J.B."/>
            <person name="Mohamoud Y."/>
            <person name="Watkins K."/>
            <person name="Henrissat B."/>
            <person name="Gilbert H.J."/>
            <person name="Nelson K.E."/>
        </authorList>
    </citation>
    <scope>NUCLEOTIDE SEQUENCE [LARGE SCALE GENOMIC DNA]</scope>
    <source>
        <strain>Ueda107</strain>
    </source>
</reference>
<keyword id="KW-0068">Autocatalytic cleavage</keyword>
<keyword id="KW-0227">DNA damage</keyword>
<keyword id="KW-0234">DNA repair</keyword>
<keyword id="KW-0235">DNA replication</keyword>
<keyword id="KW-0238">DNA-binding</keyword>
<keyword id="KW-0378">Hydrolase</keyword>
<keyword id="KW-1185">Reference proteome</keyword>
<keyword id="KW-0678">Repressor</keyword>
<keyword id="KW-0742">SOS response</keyword>
<keyword id="KW-0804">Transcription</keyword>
<keyword id="KW-0805">Transcription regulation</keyword>
<feature type="chain" id="PRO_1000089556" description="LexA repressor">
    <location>
        <begin position="1"/>
        <end position="200"/>
    </location>
</feature>
<feature type="DNA-binding region" description="H-T-H motif" evidence="1">
    <location>
        <begin position="28"/>
        <end position="48"/>
    </location>
</feature>
<feature type="active site" description="For autocatalytic cleavage activity" evidence="1">
    <location>
        <position position="118"/>
    </location>
</feature>
<feature type="active site" description="For autocatalytic cleavage activity" evidence="1">
    <location>
        <position position="155"/>
    </location>
</feature>
<feature type="site" description="Cleavage; by autolysis" evidence="1">
    <location>
        <begin position="83"/>
        <end position="84"/>
    </location>
</feature>
<name>LEXA_CELJU</name>